<feature type="chain" id="PRO_1000130661" description="Nucleotide-binding protein YPK_3247">
    <location>
        <begin position="1"/>
        <end position="163"/>
    </location>
</feature>
<organism>
    <name type="scientific">Yersinia pseudotuberculosis serotype O:3 (strain YPIII)</name>
    <dbReference type="NCBI Taxonomy" id="502800"/>
    <lineage>
        <taxon>Bacteria</taxon>
        <taxon>Pseudomonadati</taxon>
        <taxon>Pseudomonadota</taxon>
        <taxon>Gammaproteobacteria</taxon>
        <taxon>Enterobacterales</taxon>
        <taxon>Yersiniaceae</taxon>
        <taxon>Yersinia</taxon>
    </lineage>
</organism>
<dbReference type="EMBL" id="CP000950">
    <property type="protein sequence ID" value="ACA69516.1"/>
    <property type="molecule type" value="Genomic_DNA"/>
</dbReference>
<dbReference type="RefSeq" id="WP_002208655.1">
    <property type="nucleotide sequence ID" value="NZ_CP009792.1"/>
</dbReference>
<dbReference type="SMR" id="B1JID2"/>
<dbReference type="KEGG" id="ypy:YPK_3247"/>
<dbReference type="PATRIC" id="fig|502800.11.peg.3975"/>
<dbReference type="GO" id="GO:0005829">
    <property type="term" value="C:cytosol"/>
    <property type="evidence" value="ECO:0007669"/>
    <property type="project" value="TreeGrafter"/>
</dbReference>
<dbReference type="GO" id="GO:0000166">
    <property type="term" value="F:nucleotide binding"/>
    <property type="evidence" value="ECO:0007669"/>
    <property type="project" value="TreeGrafter"/>
</dbReference>
<dbReference type="CDD" id="cd11740">
    <property type="entry name" value="YajQ_like"/>
    <property type="match status" value="1"/>
</dbReference>
<dbReference type="FunFam" id="3.30.70.860:FF:000001">
    <property type="entry name" value="UPF0234 protein YajQ"/>
    <property type="match status" value="1"/>
</dbReference>
<dbReference type="FunFam" id="3.30.70.990:FF:000001">
    <property type="entry name" value="UPF0234 protein YajQ"/>
    <property type="match status" value="1"/>
</dbReference>
<dbReference type="Gene3D" id="3.30.70.860">
    <property type="match status" value="1"/>
</dbReference>
<dbReference type="Gene3D" id="3.30.70.990">
    <property type="entry name" value="YajQ-like, domain 2"/>
    <property type="match status" value="1"/>
</dbReference>
<dbReference type="HAMAP" id="MF_00632">
    <property type="entry name" value="YajQ"/>
    <property type="match status" value="1"/>
</dbReference>
<dbReference type="InterPro" id="IPR007551">
    <property type="entry name" value="DUF520"/>
</dbReference>
<dbReference type="InterPro" id="IPR035571">
    <property type="entry name" value="UPF0234-like_C"/>
</dbReference>
<dbReference type="InterPro" id="IPR035570">
    <property type="entry name" value="UPF0234_N"/>
</dbReference>
<dbReference type="InterPro" id="IPR036183">
    <property type="entry name" value="YajQ-like_sf"/>
</dbReference>
<dbReference type="NCBIfam" id="NF003819">
    <property type="entry name" value="PRK05412.1"/>
    <property type="match status" value="1"/>
</dbReference>
<dbReference type="PANTHER" id="PTHR30476">
    <property type="entry name" value="UPF0234 PROTEIN YAJQ"/>
    <property type="match status" value="1"/>
</dbReference>
<dbReference type="PANTHER" id="PTHR30476:SF0">
    <property type="entry name" value="UPF0234 PROTEIN YAJQ"/>
    <property type="match status" value="1"/>
</dbReference>
<dbReference type="Pfam" id="PF04461">
    <property type="entry name" value="DUF520"/>
    <property type="match status" value="1"/>
</dbReference>
<dbReference type="SUPFAM" id="SSF89963">
    <property type="entry name" value="YajQ-like"/>
    <property type="match status" value="2"/>
</dbReference>
<name>Y3247_YERPY</name>
<sequence>MPSFDIVSEIDMQEVRNAVENATRDLANRWDFRNVPASFELNEKNESIKVVSESDFQVEQLLDILRAQLSKRGIEGAALEIPEEMARSGKTYSVDAKLKQGIESVQAKKLVKLIKDSKLKVQAQIQGEQVRVTGKARDDLQAVMALVRAADLGQPFQFNNFRD</sequence>
<reference key="1">
    <citation type="submission" date="2008-02" db="EMBL/GenBank/DDBJ databases">
        <title>Complete sequence of Yersinia pseudotuberculosis YPIII.</title>
        <authorList>
            <consortium name="US DOE Joint Genome Institute"/>
            <person name="Copeland A."/>
            <person name="Lucas S."/>
            <person name="Lapidus A."/>
            <person name="Glavina del Rio T."/>
            <person name="Dalin E."/>
            <person name="Tice H."/>
            <person name="Bruce D."/>
            <person name="Goodwin L."/>
            <person name="Pitluck S."/>
            <person name="Munk A.C."/>
            <person name="Brettin T."/>
            <person name="Detter J.C."/>
            <person name="Han C."/>
            <person name="Tapia R."/>
            <person name="Schmutz J."/>
            <person name="Larimer F."/>
            <person name="Land M."/>
            <person name="Hauser L."/>
            <person name="Challacombe J.F."/>
            <person name="Green L."/>
            <person name="Lindler L.E."/>
            <person name="Nikolich M.P."/>
            <person name="Richardson P."/>
        </authorList>
    </citation>
    <scope>NUCLEOTIDE SEQUENCE [LARGE SCALE GENOMIC DNA]</scope>
    <source>
        <strain>YPIII</strain>
    </source>
</reference>
<comment type="function">
    <text evidence="1">Nucleotide-binding protein.</text>
</comment>
<comment type="similarity">
    <text evidence="1">Belongs to the YajQ family.</text>
</comment>
<evidence type="ECO:0000255" key="1">
    <source>
        <dbReference type="HAMAP-Rule" id="MF_00632"/>
    </source>
</evidence>
<protein>
    <recommendedName>
        <fullName evidence="1">Nucleotide-binding protein YPK_3247</fullName>
    </recommendedName>
</protein>
<accession>B1JID2</accession>
<gene>
    <name type="ordered locus">YPK_3247</name>
</gene>
<keyword id="KW-0547">Nucleotide-binding</keyword>
<proteinExistence type="inferred from homology"/>